<protein>
    <recommendedName>
        <fullName evidence="1">3-ketoacyl-CoA thiolase</fullName>
        <ecNumber evidence="1">2.3.1.16</ecNumber>
    </recommendedName>
    <alternativeName>
        <fullName evidence="1">ACSs</fullName>
    </alternativeName>
    <alternativeName>
        <fullName evidence="1">Acetyl-CoA acyltransferase</fullName>
    </alternativeName>
    <alternativeName>
        <fullName evidence="1">Acyl-CoA ligase</fullName>
    </alternativeName>
    <alternativeName>
        <fullName evidence="1">Beta-ketothiolase</fullName>
    </alternativeName>
    <alternativeName>
        <fullName evidence="1">Fatty acid oxidation complex subunit beta</fullName>
    </alternativeName>
</protein>
<reference key="1">
    <citation type="journal article" date="2011" name="J. Bacteriol.">
        <title>Comparative genomics of 28 Salmonella enterica isolates: evidence for CRISPR-mediated adaptive sublineage evolution.</title>
        <authorList>
            <person name="Fricke W.F."/>
            <person name="Mammel M.K."/>
            <person name="McDermott P.F."/>
            <person name="Tartera C."/>
            <person name="White D.G."/>
            <person name="Leclerc J.E."/>
            <person name="Ravel J."/>
            <person name="Cebula T.A."/>
        </authorList>
    </citation>
    <scope>NUCLEOTIDE SEQUENCE [LARGE SCALE GENOMIC DNA]</scope>
    <source>
        <strain>SL476</strain>
    </source>
</reference>
<evidence type="ECO:0000255" key="1">
    <source>
        <dbReference type="HAMAP-Rule" id="MF_01618"/>
    </source>
</evidence>
<gene>
    <name evidence="1" type="primary">fadI</name>
    <name type="ordered locus">SeHA_C2631</name>
</gene>
<dbReference type="EC" id="2.3.1.16" evidence="1"/>
<dbReference type="EMBL" id="CP001120">
    <property type="protein sequence ID" value="ACF68384.1"/>
    <property type="molecule type" value="Genomic_DNA"/>
</dbReference>
<dbReference type="RefSeq" id="WP_001248122.1">
    <property type="nucleotide sequence ID" value="NC_011083.1"/>
</dbReference>
<dbReference type="SMR" id="B4TCA9"/>
<dbReference type="KEGG" id="seh:SeHA_C2631"/>
<dbReference type="HOGENOM" id="CLU_031026_2_0_6"/>
<dbReference type="UniPathway" id="UPA00659"/>
<dbReference type="Proteomes" id="UP000001866">
    <property type="component" value="Chromosome"/>
</dbReference>
<dbReference type="GO" id="GO:0005829">
    <property type="term" value="C:cytosol"/>
    <property type="evidence" value="ECO:0007669"/>
    <property type="project" value="TreeGrafter"/>
</dbReference>
<dbReference type="GO" id="GO:0003988">
    <property type="term" value="F:acetyl-CoA C-acyltransferase activity"/>
    <property type="evidence" value="ECO:0007669"/>
    <property type="project" value="UniProtKB-UniRule"/>
</dbReference>
<dbReference type="GO" id="GO:0006635">
    <property type="term" value="P:fatty acid beta-oxidation"/>
    <property type="evidence" value="ECO:0007669"/>
    <property type="project" value="UniProtKB-UniRule"/>
</dbReference>
<dbReference type="CDD" id="cd00751">
    <property type="entry name" value="thiolase"/>
    <property type="match status" value="1"/>
</dbReference>
<dbReference type="FunFam" id="3.40.47.10:FF:000011">
    <property type="entry name" value="3-ketoacyl-CoA thiolase"/>
    <property type="match status" value="1"/>
</dbReference>
<dbReference type="Gene3D" id="3.40.47.10">
    <property type="match status" value="1"/>
</dbReference>
<dbReference type="HAMAP" id="MF_01618">
    <property type="entry name" value="FadI"/>
    <property type="match status" value="1"/>
</dbReference>
<dbReference type="InterPro" id="IPR012806">
    <property type="entry name" value="Ac-CoA_C-AcTrfase_FadI"/>
</dbReference>
<dbReference type="InterPro" id="IPR002155">
    <property type="entry name" value="Thiolase"/>
</dbReference>
<dbReference type="InterPro" id="IPR016039">
    <property type="entry name" value="Thiolase-like"/>
</dbReference>
<dbReference type="InterPro" id="IPR020615">
    <property type="entry name" value="Thiolase_acyl_enz_int_AS"/>
</dbReference>
<dbReference type="InterPro" id="IPR020610">
    <property type="entry name" value="Thiolase_AS"/>
</dbReference>
<dbReference type="InterPro" id="IPR020617">
    <property type="entry name" value="Thiolase_C"/>
</dbReference>
<dbReference type="InterPro" id="IPR020613">
    <property type="entry name" value="Thiolase_CS"/>
</dbReference>
<dbReference type="InterPro" id="IPR020616">
    <property type="entry name" value="Thiolase_N"/>
</dbReference>
<dbReference type="NCBIfam" id="TIGR01930">
    <property type="entry name" value="AcCoA-C-Actrans"/>
    <property type="match status" value="1"/>
</dbReference>
<dbReference type="NCBIfam" id="TIGR02446">
    <property type="entry name" value="FadI"/>
    <property type="match status" value="1"/>
</dbReference>
<dbReference type="NCBIfam" id="NF006516">
    <property type="entry name" value="PRK08963.1"/>
    <property type="match status" value="1"/>
</dbReference>
<dbReference type="PANTHER" id="PTHR18919:SF107">
    <property type="entry name" value="ACETYL-COA ACETYLTRANSFERASE, CYTOSOLIC"/>
    <property type="match status" value="1"/>
</dbReference>
<dbReference type="PANTHER" id="PTHR18919">
    <property type="entry name" value="ACETYL-COA C-ACYLTRANSFERASE"/>
    <property type="match status" value="1"/>
</dbReference>
<dbReference type="Pfam" id="PF02803">
    <property type="entry name" value="Thiolase_C"/>
    <property type="match status" value="1"/>
</dbReference>
<dbReference type="Pfam" id="PF00108">
    <property type="entry name" value="Thiolase_N"/>
    <property type="match status" value="1"/>
</dbReference>
<dbReference type="PIRSF" id="PIRSF000429">
    <property type="entry name" value="Ac-CoA_Ac_transf"/>
    <property type="match status" value="1"/>
</dbReference>
<dbReference type="SUPFAM" id="SSF53901">
    <property type="entry name" value="Thiolase-like"/>
    <property type="match status" value="2"/>
</dbReference>
<dbReference type="PROSITE" id="PS00098">
    <property type="entry name" value="THIOLASE_1"/>
    <property type="match status" value="1"/>
</dbReference>
<dbReference type="PROSITE" id="PS00737">
    <property type="entry name" value="THIOLASE_2"/>
    <property type="match status" value="1"/>
</dbReference>
<dbReference type="PROSITE" id="PS00099">
    <property type="entry name" value="THIOLASE_3"/>
    <property type="match status" value="1"/>
</dbReference>
<proteinExistence type="inferred from homology"/>
<feature type="chain" id="PRO_1000185974" description="3-ketoacyl-CoA thiolase">
    <location>
        <begin position="1"/>
        <end position="436"/>
    </location>
</feature>
<feature type="active site" description="Acyl-thioester intermediate" evidence="1">
    <location>
        <position position="99"/>
    </location>
</feature>
<feature type="active site" description="Proton acceptor" evidence="1">
    <location>
        <position position="392"/>
    </location>
</feature>
<feature type="active site" description="Proton acceptor" evidence="1">
    <location>
        <position position="422"/>
    </location>
</feature>
<keyword id="KW-0012">Acyltransferase</keyword>
<keyword id="KW-0963">Cytoplasm</keyword>
<keyword id="KW-0276">Fatty acid metabolism</keyword>
<keyword id="KW-0442">Lipid degradation</keyword>
<keyword id="KW-0443">Lipid metabolism</keyword>
<keyword id="KW-0808">Transferase</keyword>
<sequence>MRQALPLVTRQGDRIAIVSGLRTPFARQATAFHGIPAVDLGKMVVGELLARSEIPADAIEQLVFGQVVQMPEAPNIAREIVLGTGMNVHTDAYSVSRACATSFQAVANVAESLMAGTIRAGIAGGADSSSVLPIGVSKALARVLVDVNKARTTRQRLTLFSRLRLRDLLPVPPAVAEYSTGLRMGDTAEQMAKTYGITREQQDALAHRSHQRAAQAWAEGKLAEEVMTTYVPPYKNPFAEDNNIRGASTLADYAKLRPAFDRKHGSVTAANSTPLTDGAAAVILMTESRAKELGLRPLGYLRSYAFTAIDVWQDMLLGPAWSTPLALERAGLTMADLTLFDMHEAFAAQTLANLQLLGSERFACEVLGRAQATGEVDDAKFNVLGGSIAYGHPFAATGARMITQTLHELRRRGGGFGLVTACAAGGLGAAMVLEAE</sequence>
<comment type="function">
    <text evidence="1">Catalyzes the final step of fatty acid oxidation in which acetyl-CoA is released and the CoA ester of a fatty acid two carbons shorter is formed.</text>
</comment>
<comment type="catalytic activity">
    <reaction evidence="1">
        <text>an acyl-CoA + acetyl-CoA = a 3-oxoacyl-CoA + CoA</text>
        <dbReference type="Rhea" id="RHEA:21564"/>
        <dbReference type="ChEBI" id="CHEBI:57287"/>
        <dbReference type="ChEBI" id="CHEBI:57288"/>
        <dbReference type="ChEBI" id="CHEBI:58342"/>
        <dbReference type="ChEBI" id="CHEBI:90726"/>
        <dbReference type="EC" id="2.3.1.16"/>
    </reaction>
</comment>
<comment type="pathway">
    <text evidence="1">Lipid metabolism; fatty acid beta-oxidation.</text>
</comment>
<comment type="subunit">
    <text evidence="1">Heterotetramer of two alpha chains (FadJ) and two beta chains (FadI).</text>
</comment>
<comment type="subcellular location">
    <subcellularLocation>
        <location evidence="1">Cytoplasm</location>
    </subcellularLocation>
</comment>
<comment type="similarity">
    <text evidence="1">Belongs to the thiolase-like superfamily. Thiolase family.</text>
</comment>
<accession>B4TCA9</accession>
<name>FADI_SALHS</name>
<organism>
    <name type="scientific">Salmonella heidelberg (strain SL476)</name>
    <dbReference type="NCBI Taxonomy" id="454169"/>
    <lineage>
        <taxon>Bacteria</taxon>
        <taxon>Pseudomonadati</taxon>
        <taxon>Pseudomonadota</taxon>
        <taxon>Gammaproteobacteria</taxon>
        <taxon>Enterobacterales</taxon>
        <taxon>Enterobacteriaceae</taxon>
        <taxon>Salmonella</taxon>
    </lineage>
</organism>